<feature type="chain" id="PRO_0000123482" description="Myosin-51">
    <location>
        <begin position="1"/>
        <end position="1471"/>
    </location>
</feature>
<feature type="domain" description="Myosin N-terminal SH3-like" evidence="5">
    <location>
        <begin position="7"/>
        <end position="61"/>
    </location>
</feature>
<feature type="domain" description="Myosin motor" evidence="4">
    <location>
        <begin position="65"/>
        <end position="749"/>
    </location>
</feature>
<feature type="domain" description="IQ 1" evidence="2">
    <location>
        <begin position="753"/>
        <end position="773"/>
    </location>
</feature>
<feature type="domain" description="IQ 2" evidence="2">
    <location>
        <begin position="776"/>
        <end position="796"/>
    </location>
</feature>
<feature type="domain" description="IQ 3" evidence="2">
    <location>
        <begin position="801"/>
        <end position="821"/>
    </location>
</feature>
<feature type="domain" description="IQ 4" evidence="2">
    <location>
        <begin position="824"/>
        <end position="844"/>
    </location>
</feature>
<feature type="domain" description="IQ 5" evidence="2">
    <location>
        <begin position="849"/>
        <end position="869"/>
    </location>
</feature>
<feature type="domain" description="IQ 6" evidence="2">
    <location>
        <begin position="872"/>
        <end position="892"/>
    </location>
</feature>
<feature type="domain" description="Dilute" evidence="3">
    <location>
        <begin position="1171"/>
        <end position="1417"/>
    </location>
</feature>
<feature type="region of interest" description="Actin-binding" evidence="4">
    <location>
        <begin position="628"/>
        <end position="650"/>
    </location>
</feature>
<feature type="coiled-coil region" evidence="1">
    <location>
        <begin position="909"/>
        <end position="952"/>
    </location>
</feature>
<feature type="binding site" evidence="1">
    <location>
        <begin position="159"/>
        <end position="166"/>
    </location>
    <ligand>
        <name>ATP</name>
        <dbReference type="ChEBI" id="CHEBI:30616"/>
    </ligand>
</feature>
<organism>
    <name type="scientific">Schizosaccharomyces pombe (strain 972 / ATCC 24843)</name>
    <name type="common">Fission yeast</name>
    <dbReference type="NCBI Taxonomy" id="284812"/>
    <lineage>
        <taxon>Eukaryota</taxon>
        <taxon>Fungi</taxon>
        <taxon>Dikarya</taxon>
        <taxon>Ascomycota</taxon>
        <taxon>Taphrinomycotina</taxon>
        <taxon>Schizosaccharomycetes</taxon>
        <taxon>Schizosaccharomycetales</taxon>
        <taxon>Schizosaccharomycetaceae</taxon>
        <taxon>Schizosaccharomyces</taxon>
    </lineage>
</organism>
<protein>
    <recommendedName>
        <fullName>Myosin-51</fullName>
    </recommendedName>
    <alternativeName>
        <fullName>Myosin type V-1</fullName>
    </alternativeName>
</protein>
<gene>
    <name type="primary">myo51</name>
    <name type="ORF">SPBC2D10.14c</name>
</gene>
<accession>O74805</accession>
<proteinExistence type="inferred from homology"/>
<comment type="function">
    <text evidence="6">Involved in cytokinesis.</text>
</comment>
<comment type="subcellular location">
    <subcellularLocation>
        <location evidence="6">Cytoplasm</location>
    </subcellularLocation>
    <text>Component of the cytokinetic actin ring (CAR).</text>
</comment>
<comment type="similarity">
    <text evidence="7">Belongs to the TRAFAC class myosin-kinesin ATPase superfamily. Myosin family.</text>
</comment>
<keyword id="KW-0009">Actin-binding</keyword>
<keyword id="KW-0067">ATP-binding</keyword>
<keyword id="KW-0112">Calmodulin-binding</keyword>
<keyword id="KW-0175">Coiled coil</keyword>
<keyword id="KW-0963">Cytoplasm</keyword>
<keyword id="KW-0505">Motor protein</keyword>
<keyword id="KW-0518">Myosin</keyword>
<keyword id="KW-0547">Nucleotide-binding</keyword>
<keyword id="KW-1185">Reference proteome</keyword>
<keyword id="KW-0677">Repeat</keyword>
<reference key="1">
    <citation type="journal article" date="2002" name="Nature">
        <title>The genome sequence of Schizosaccharomyces pombe.</title>
        <authorList>
            <person name="Wood V."/>
            <person name="Gwilliam R."/>
            <person name="Rajandream M.A."/>
            <person name="Lyne M.H."/>
            <person name="Lyne R."/>
            <person name="Stewart A."/>
            <person name="Sgouros J.G."/>
            <person name="Peat N."/>
            <person name="Hayles J."/>
            <person name="Baker S.G."/>
            <person name="Basham D."/>
            <person name="Bowman S."/>
            <person name="Brooks K."/>
            <person name="Brown D."/>
            <person name="Brown S."/>
            <person name="Chillingworth T."/>
            <person name="Churcher C.M."/>
            <person name="Collins M."/>
            <person name="Connor R."/>
            <person name="Cronin A."/>
            <person name="Davis P."/>
            <person name="Feltwell T."/>
            <person name="Fraser A."/>
            <person name="Gentles S."/>
            <person name="Goble A."/>
            <person name="Hamlin N."/>
            <person name="Harris D.E."/>
            <person name="Hidalgo J."/>
            <person name="Hodgson G."/>
            <person name="Holroyd S."/>
            <person name="Hornsby T."/>
            <person name="Howarth S."/>
            <person name="Huckle E.J."/>
            <person name="Hunt S."/>
            <person name="Jagels K."/>
            <person name="James K.D."/>
            <person name="Jones L."/>
            <person name="Jones M."/>
            <person name="Leather S."/>
            <person name="McDonald S."/>
            <person name="McLean J."/>
            <person name="Mooney P."/>
            <person name="Moule S."/>
            <person name="Mungall K.L."/>
            <person name="Murphy L.D."/>
            <person name="Niblett D."/>
            <person name="Odell C."/>
            <person name="Oliver K."/>
            <person name="O'Neil S."/>
            <person name="Pearson D."/>
            <person name="Quail M.A."/>
            <person name="Rabbinowitsch E."/>
            <person name="Rutherford K.M."/>
            <person name="Rutter S."/>
            <person name="Saunders D."/>
            <person name="Seeger K."/>
            <person name="Sharp S."/>
            <person name="Skelton J."/>
            <person name="Simmonds M.N."/>
            <person name="Squares R."/>
            <person name="Squares S."/>
            <person name="Stevens K."/>
            <person name="Taylor K."/>
            <person name="Taylor R.G."/>
            <person name="Tivey A."/>
            <person name="Walsh S.V."/>
            <person name="Warren T."/>
            <person name="Whitehead S."/>
            <person name="Woodward J.R."/>
            <person name="Volckaert G."/>
            <person name="Aert R."/>
            <person name="Robben J."/>
            <person name="Grymonprez B."/>
            <person name="Weltjens I."/>
            <person name="Vanstreels E."/>
            <person name="Rieger M."/>
            <person name="Schaefer M."/>
            <person name="Mueller-Auer S."/>
            <person name="Gabel C."/>
            <person name="Fuchs M."/>
            <person name="Duesterhoeft A."/>
            <person name="Fritzc C."/>
            <person name="Holzer E."/>
            <person name="Moestl D."/>
            <person name="Hilbert H."/>
            <person name="Borzym K."/>
            <person name="Langer I."/>
            <person name="Beck A."/>
            <person name="Lehrach H."/>
            <person name="Reinhardt R."/>
            <person name="Pohl T.M."/>
            <person name="Eger P."/>
            <person name="Zimmermann W."/>
            <person name="Wedler H."/>
            <person name="Wambutt R."/>
            <person name="Purnelle B."/>
            <person name="Goffeau A."/>
            <person name="Cadieu E."/>
            <person name="Dreano S."/>
            <person name="Gloux S."/>
            <person name="Lelaure V."/>
            <person name="Mottier S."/>
            <person name="Galibert F."/>
            <person name="Aves S.J."/>
            <person name="Xiang Z."/>
            <person name="Hunt C."/>
            <person name="Moore K."/>
            <person name="Hurst S.M."/>
            <person name="Lucas M."/>
            <person name="Rochet M."/>
            <person name="Gaillardin C."/>
            <person name="Tallada V.A."/>
            <person name="Garzon A."/>
            <person name="Thode G."/>
            <person name="Daga R.R."/>
            <person name="Cruzado L."/>
            <person name="Jimenez J."/>
            <person name="Sanchez M."/>
            <person name="del Rey F."/>
            <person name="Benito J."/>
            <person name="Dominguez A."/>
            <person name="Revuelta J.L."/>
            <person name="Moreno S."/>
            <person name="Armstrong J."/>
            <person name="Forsburg S.L."/>
            <person name="Cerutti L."/>
            <person name="Lowe T."/>
            <person name="McCombie W.R."/>
            <person name="Paulsen I."/>
            <person name="Potashkin J."/>
            <person name="Shpakovski G.V."/>
            <person name="Ussery D."/>
            <person name="Barrell B.G."/>
            <person name="Nurse P."/>
        </authorList>
    </citation>
    <scope>NUCLEOTIDE SEQUENCE [LARGE SCALE GENOMIC DNA]</scope>
    <source>
        <strain>972 / ATCC 24843</strain>
    </source>
</reference>
<reference key="2">
    <citation type="journal article" date="2001" name="J. Cell Sci.">
        <title>Two type V myosins with non-overlapping functions in the fission yeast Schizosaccharomyces pombe: Myo52 is concerned with growth polarity and cytokinesis, Myo51 is a component of the cytokinetic actin ring.</title>
        <authorList>
            <person name="Win T.Z."/>
            <person name="Gachet Y."/>
            <person name="Mulvihill D.P."/>
            <person name="May K.M."/>
            <person name="Hyams J.S."/>
        </authorList>
    </citation>
    <scope>FUNCTION</scope>
    <scope>SUBCELLULAR LOCATION</scope>
</reference>
<dbReference type="EMBL" id="CU329671">
    <property type="protein sequence ID" value="CAA21172.1"/>
    <property type="molecule type" value="Genomic_DNA"/>
</dbReference>
<dbReference type="PIR" id="T40117">
    <property type="entry name" value="T40117"/>
</dbReference>
<dbReference type="RefSeq" id="NP_596233.1">
    <property type="nucleotide sequence ID" value="NM_001022153.2"/>
</dbReference>
<dbReference type="SMR" id="O74805"/>
<dbReference type="BioGRID" id="277087">
    <property type="interactions" value="41"/>
</dbReference>
<dbReference type="FunCoup" id="O74805">
    <property type="interactions" value="1"/>
</dbReference>
<dbReference type="STRING" id="284812.O74805"/>
<dbReference type="iPTMnet" id="O74805"/>
<dbReference type="PaxDb" id="4896-SPBC2D10.14c.1"/>
<dbReference type="EnsemblFungi" id="SPBC2D10.14c.1">
    <property type="protein sequence ID" value="SPBC2D10.14c.1:pep"/>
    <property type="gene ID" value="SPBC2D10.14c"/>
</dbReference>
<dbReference type="GeneID" id="2540560"/>
<dbReference type="KEGG" id="spo:2540560"/>
<dbReference type="PomBase" id="SPBC2D10.14c">
    <property type="gene designation" value="myo51"/>
</dbReference>
<dbReference type="VEuPathDB" id="FungiDB:SPBC2D10.14c"/>
<dbReference type="eggNOG" id="KOG0160">
    <property type="taxonomic scope" value="Eukaryota"/>
</dbReference>
<dbReference type="HOGENOM" id="CLU_000192_9_0_1"/>
<dbReference type="InParanoid" id="O74805"/>
<dbReference type="OMA" id="RDIRMHL"/>
<dbReference type="PhylomeDB" id="O74805"/>
<dbReference type="Reactome" id="R-SPO-9013419">
    <property type="pathway name" value="RHOT2 GTPase cycle"/>
</dbReference>
<dbReference type="Reactome" id="R-SPO-9013420">
    <property type="pathway name" value="RHOU GTPase cycle"/>
</dbReference>
<dbReference type="Reactome" id="R-SPO-9013425">
    <property type="pathway name" value="RHOT1 GTPase cycle"/>
</dbReference>
<dbReference type="PRO" id="PR:O74805"/>
<dbReference type="Proteomes" id="UP000002485">
    <property type="component" value="Chromosome II"/>
</dbReference>
<dbReference type="GO" id="GO:0015629">
    <property type="term" value="C:actin cytoskeleton"/>
    <property type="evidence" value="ECO:0000318"/>
    <property type="project" value="GO_Central"/>
</dbReference>
<dbReference type="GO" id="GO:0032153">
    <property type="term" value="C:cell division site"/>
    <property type="evidence" value="ECO:0000314"/>
    <property type="project" value="PomBase"/>
</dbReference>
<dbReference type="GO" id="GO:0005737">
    <property type="term" value="C:cytoplasm"/>
    <property type="evidence" value="ECO:0000318"/>
    <property type="project" value="GO_Central"/>
</dbReference>
<dbReference type="GO" id="GO:0005829">
    <property type="term" value="C:cytosol"/>
    <property type="evidence" value="ECO:0007005"/>
    <property type="project" value="PomBase"/>
</dbReference>
<dbReference type="GO" id="GO:0070648">
    <property type="term" value="C:formin-nucleated actin cable"/>
    <property type="evidence" value="ECO:0000314"/>
    <property type="project" value="PomBase"/>
</dbReference>
<dbReference type="GO" id="GO:1990819">
    <property type="term" value="C:mating projection actin fusion focus"/>
    <property type="evidence" value="ECO:0000314"/>
    <property type="project" value="PomBase"/>
</dbReference>
<dbReference type="GO" id="GO:0031097">
    <property type="term" value="C:medial cortex"/>
    <property type="evidence" value="ECO:0000314"/>
    <property type="project" value="PomBase"/>
</dbReference>
<dbReference type="GO" id="GO:0016020">
    <property type="term" value="C:membrane"/>
    <property type="evidence" value="ECO:0000318"/>
    <property type="project" value="GO_Central"/>
</dbReference>
<dbReference type="GO" id="GO:0110085">
    <property type="term" value="C:mitotic actomyosin contractile ring"/>
    <property type="evidence" value="ECO:0000314"/>
    <property type="project" value="PomBase"/>
</dbReference>
<dbReference type="GO" id="GO:0120104">
    <property type="term" value="C:mitotic actomyosin contractile ring, proximal layer"/>
    <property type="evidence" value="ECO:0000314"/>
    <property type="project" value="PomBase"/>
</dbReference>
<dbReference type="GO" id="GO:0016459">
    <property type="term" value="C:myosin complex"/>
    <property type="evidence" value="ECO:0000255"/>
    <property type="project" value="PomBase"/>
</dbReference>
<dbReference type="GO" id="GO:0051015">
    <property type="term" value="F:actin filament binding"/>
    <property type="evidence" value="ECO:0000318"/>
    <property type="project" value="GO_Central"/>
</dbReference>
<dbReference type="GO" id="GO:0005524">
    <property type="term" value="F:ATP binding"/>
    <property type="evidence" value="ECO:0000255"/>
    <property type="project" value="PomBase"/>
</dbReference>
<dbReference type="GO" id="GO:0016887">
    <property type="term" value="F:ATP hydrolysis activity"/>
    <property type="evidence" value="ECO:0000305"/>
    <property type="project" value="PomBase"/>
</dbReference>
<dbReference type="GO" id="GO:0005516">
    <property type="term" value="F:calmodulin binding"/>
    <property type="evidence" value="ECO:0007669"/>
    <property type="project" value="UniProtKB-KW"/>
</dbReference>
<dbReference type="GO" id="GO:0000146">
    <property type="term" value="F:microfilament motor activity"/>
    <property type="evidence" value="ECO:0000314"/>
    <property type="project" value="PomBase"/>
</dbReference>
<dbReference type="GO" id="GO:0061572">
    <property type="term" value="P:actin filament bundle organization"/>
    <property type="evidence" value="ECO:0000315"/>
    <property type="project" value="PomBase"/>
</dbReference>
<dbReference type="GO" id="GO:0007015">
    <property type="term" value="P:actin filament organization"/>
    <property type="evidence" value="ECO:0000318"/>
    <property type="project" value="GO_Central"/>
</dbReference>
<dbReference type="GO" id="GO:0071520">
    <property type="term" value="P:actomyosin contractile ring assembly actin filament bundle convergence"/>
    <property type="evidence" value="ECO:0000315"/>
    <property type="project" value="PomBase"/>
</dbReference>
<dbReference type="GO" id="GO:0070649">
    <property type="term" value="P:formin-nucleated actin cable assembly"/>
    <property type="evidence" value="ECO:0000315"/>
    <property type="project" value="PomBase"/>
</dbReference>
<dbReference type="GO" id="GO:1904601">
    <property type="term" value="P:protein transport to mating projection actin fusion focus"/>
    <property type="evidence" value="ECO:0000269"/>
    <property type="project" value="PomBase"/>
</dbReference>
<dbReference type="CDD" id="cd23767">
    <property type="entry name" value="IQCD"/>
    <property type="match status" value="1"/>
</dbReference>
<dbReference type="CDD" id="cd15474">
    <property type="entry name" value="Myo5p-like_CBD_fungal"/>
    <property type="match status" value="1"/>
</dbReference>
<dbReference type="CDD" id="cd01380">
    <property type="entry name" value="MYSc_Myo5"/>
    <property type="match status" value="1"/>
</dbReference>
<dbReference type="FunFam" id="1.10.10.820:FF:000001">
    <property type="entry name" value="Myosin heavy chain"/>
    <property type="match status" value="1"/>
</dbReference>
<dbReference type="Gene3D" id="1.10.10.820">
    <property type="match status" value="1"/>
</dbReference>
<dbReference type="Gene3D" id="1.20.5.190">
    <property type="match status" value="3"/>
</dbReference>
<dbReference type="Gene3D" id="1.20.58.530">
    <property type="match status" value="1"/>
</dbReference>
<dbReference type="Gene3D" id="6.20.240.20">
    <property type="match status" value="1"/>
</dbReference>
<dbReference type="Gene3D" id="3.40.850.10">
    <property type="entry name" value="Kinesin motor domain"/>
    <property type="match status" value="1"/>
</dbReference>
<dbReference type="Gene3D" id="1.20.120.720">
    <property type="entry name" value="Myosin VI head, motor domain, U50 subdomain"/>
    <property type="match status" value="1"/>
</dbReference>
<dbReference type="InterPro" id="IPR002710">
    <property type="entry name" value="Dilute_dom"/>
</dbReference>
<dbReference type="InterPro" id="IPR000048">
    <property type="entry name" value="IQ_motif_EF-hand-BS"/>
</dbReference>
<dbReference type="InterPro" id="IPR036961">
    <property type="entry name" value="Kinesin_motor_dom_sf"/>
</dbReference>
<dbReference type="InterPro" id="IPR001609">
    <property type="entry name" value="Myosin_head_motor_dom-like"/>
</dbReference>
<dbReference type="InterPro" id="IPR004009">
    <property type="entry name" value="Myosin_N"/>
</dbReference>
<dbReference type="InterPro" id="IPR036103">
    <property type="entry name" value="MYSc_Myo5"/>
</dbReference>
<dbReference type="InterPro" id="IPR027417">
    <property type="entry name" value="P-loop_NTPase"/>
</dbReference>
<dbReference type="PANTHER" id="PTHR13140:SF706">
    <property type="entry name" value="DILUTE CLASS UNCONVENTIONAL MYOSIN, ISOFORM C"/>
    <property type="match status" value="1"/>
</dbReference>
<dbReference type="PANTHER" id="PTHR13140">
    <property type="entry name" value="MYOSIN"/>
    <property type="match status" value="1"/>
</dbReference>
<dbReference type="Pfam" id="PF01843">
    <property type="entry name" value="DIL"/>
    <property type="match status" value="1"/>
</dbReference>
<dbReference type="Pfam" id="PF00612">
    <property type="entry name" value="IQ"/>
    <property type="match status" value="4"/>
</dbReference>
<dbReference type="Pfam" id="PF00063">
    <property type="entry name" value="Myosin_head"/>
    <property type="match status" value="1"/>
</dbReference>
<dbReference type="PRINTS" id="PR00193">
    <property type="entry name" value="MYOSINHEAVY"/>
</dbReference>
<dbReference type="SMART" id="SM01132">
    <property type="entry name" value="DIL"/>
    <property type="match status" value="1"/>
</dbReference>
<dbReference type="SMART" id="SM00015">
    <property type="entry name" value="IQ"/>
    <property type="match status" value="5"/>
</dbReference>
<dbReference type="SMART" id="SM00242">
    <property type="entry name" value="MYSc"/>
    <property type="match status" value="1"/>
</dbReference>
<dbReference type="SUPFAM" id="SSF52540">
    <property type="entry name" value="P-loop containing nucleoside triphosphate hydrolases"/>
    <property type="match status" value="2"/>
</dbReference>
<dbReference type="PROSITE" id="PS51126">
    <property type="entry name" value="DILUTE"/>
    <property type="match status" value="1"/>
</dbReference>
<dbReference type="PROSITE" id="PS50096">
    <property type="entry name" value="IQ"/>
    <property type="match status" value="4"/>
</dbReference>
<dbReference type="PROSITE" id="PS51456">
    <property type="entry name" value="MYOSIN_MOTOR"/>
    <property type="match status" value="1"/>
</dbReference>
<dbReference type="PROSITE" id="PS51844">
    <property type="entry name" value="SH3_LIKE"/>
    <property type="match status" value="1"/>
</dbReference>
<name>MYO51_SCHPO</name>
<sequence>MSHARLSVGSECWVSNNNGHWDAARLIEIKDNGGGKVVATVAKSSGVLETVNYQQLQNRNIGQSESPSDLTNLPYLNEPSVLHALHNRYNNKQIYTYSGIVLVSINPYQNLPEFYNDNLIKHFHKDPEAAKVPHLYSIASSCYHALTTDSKNQTIIVSGESGAGKTVAAKYIMRYLTSVQGVDHNGVVKRSVENQVLATNPIMEAFGNAKTIRNDNSSRFGKYVTISFDENLLITGANVNTYLLERSRVVSLLKGERNYHIFYQLITGCTEEQRDKWFLESASSFNYLSQGNCDEISGVDDSNDFTITCRALSTIGISESRQEDVFCLLAALLHLGNIEVCATRNEAQIQPGDGYLQKAALLLGVDSSTLAKWIVKRQLKTRSETIITSSTLEHAISIRDSVAKYLYSALFLWIVHMINASLDHNKVKRAAYKYIGVVDIYGFEHFEKNSMEQFCINYANEKLQQEFNKHVFKLEQEEYVKEGLDWRLIEYSDNQGCISLIEDKLGILSLLDEECRLPSGNHQSFLQKLNNQLPTKHSQFYKKSRFNDGSFMVKHYALDVSYQVHDFLAKNSDAIPDEFISLLQNSKNEFITYLLDFYMQLVSSQNKNPRKTAISRKPTLSSMFKSSLSQLMTTVSSTNVHYIRCIKPNEEKLPWTFSPPMVLSQLRACGVFETIRISSLGFPARFSYEEFAHRFRILLSSKEWEEDNKKLTLNIVNSVIPHDNLNFQVGRSKIFFRSNVIGNFEEAHRATCSKSTVLLQSAIRGFFTRKEYQRTVKFIIKLQSVIMGWLTRQRFEREKIERAAILIQAHWRSYIQRKRYLSLIKCAIVIQSIVRKNIAYSRYINELRESSATLLAKFWRAYNARKTFRGLKKSVIALQCVSRSVLTRRYLRRLQDSAGRTSILYEKQKNLQASITEVSKQLKSNSKKVTVLRNKLNILNNSLSKWKCLIKKPSDFSEPVSMDFTSNDEQLVQLLQAESKLRQASQQLYMAAKKSELGFVQSQTARENLSNYYQALQMTVSEKFEYDTEQLPSRVLFYAMDRYFSIHKKLKQLLELVGVENASLLPNEVVNKQTKDLLYEKRVVFLKQIKQALTVSSLFNAVGYKDGVMRLLETDQNSLLFAGVVNFLIFAGISLDLKTQISEFLSQLCSYFTKIVDGTVIENDKTLDFYEKPLQAVLYWFATLHKIRSFLVHLLSINSHGKQSVVEDLWNPLILKFSKHFSNLENSFHSLVQKLLSCCTEGSINALLNSKCLPEFIDAADENTTPTGMNIYELIDRMNLIHKLLISSALQPNLLELTISHMLQHIGQRAFQTLIHGRSPYTWKSASQVSYNASLLINWCHQKGISYVNSSLLPLMQSPLVFCLRKNDANDLDVILSVCNLLSPFEVVCLLNRYQPCAGENPLPKSFSKAVEALSCKYKQSGFTNGKITNTNGHAIPIAASKNPLLSLENNHIYEELRLSELINLLAKATL</sequence>
<evidence type="ECO:0000255" key="1"/>
<evidence type="ECO:0000255" key="2">
    <source>
        <dbReference type="PROSITE-ProRule" id="PRU00116"/>
    </source>
</evidence>
<evidence type="ECO:0000255" key="3">
    <source>
        <dbReference type="PROSITE-ProRule" id="PRU00503"/>
    </source>
</evidence>
<evidence type="ECO:0000255" key="4">
    <source>
        <dbReference type="PROSITE-ProRule" id="PRU00782"/>
    </source>
</evidence>
<evidence type="ECO:0000255" key="5">
    <source>
        <dbReference type="PROSITE-ProRule" id="PRU01190"/>
    </source>
</evidence>
<evidence type="ECO:0000269" key="6">
    <source>
    </source>
</evidence>
<evidence type="ECO:0000305" key="7"/>